<comment type="function">
    <text evidence="1">Catalyzes the transfer of the enolpyruvyl moiety of phosphoenolpyruvate (PEP) to the 5-hydroxyl of shikimate-3-phosphate (S3P) to produce enolpyruvyl shikimate-3-phosphate and inorganic phosphate.</text>
</comment>
<comment type="catalytic activity">
    <reaction evidence="1">
        <text>3-phosphoshikimate + phosphoenolpyruvate = 5-O-(1-carboxyvinyl)-3-phosphoshikimate + phosphate</text>
        <dbReference type="Rhea" id="RHEA:21256"/>
        <dbReference type="ChEBI" id="CHEBI:43474"/>
        <dbReference type="ChEBI" id="CHEBI:57701"/>
        <dbReference type="ChEBI" id="CHEBI:58702"/>
        <dbReference type="ChEBI" id="CHEBI:145989"/>
        <dbReference type="EC" id="2.5.1.19"/>
    </reaction>
    <physiologicalReaction direction="left-to-right" evidence="1">
        <dbReference type="Rhea" id="RHEA:21257"/>
    </physiologicalReaction>
</comment>
<comment type="pathway">
    <text evidence="1">Metabolic intermediate biosynthesis; chorismate biosynthesis; chorismate from D-erythrose 4-phosphate and phosphoenolpyruvate: step 6/7.</text>
</comment>
<comment type="subunit">
    <text evidence="1">Monomer.</text>
</comment>
<comment type="subcellular location">
    <subcellularLocation>
        <location evidence="1">Cytoplasm</location>
    </subcellularLocation>
</comment>
<comment type="similarity">
    <text evidence="1">Belongs to the EPSP synthase family.</text>
</comment>
<keyword id="KW-0028">Amino-acid biosynthesis</keyword>
<keyword id="KW-0057">Aromatic amino acid biosynthesis</keyword>
<keyword id="KW-0963">Cytoplasm</keyword>
<keyword id="KW-1185">Reference proteome</keyword>
<keyword id="KW-0808">Transferase</keyword>
<protein>
    <recommendedName>
        <fullName evidence="1">3-phosphoshikimate 1-carboxyvinyltransferase</fullName>
        <ecNumber evidence="1">2.5.1.19</ecNumber>
    </recommendedName>
    <alternativeName>
        <fullName evidence="1">5-enolpyruvylshikimate-3-phosphate synthase</fullName>
        <shortName evidence="1">EPSP synthase</shortName>
        <shortName evidence="1">EPSPS</shortName>
    </alternativeName>
</protein>
<dbReference type="EC" id="2.5.1.19" evidence="1"/>
<dbReference type="EMBL" id="CP000238">
    <property type="protein sequence ID" value="ABF14261.1"/>
    <property type="molecule type" value="Genomic_DNA"/>
</dbReference>
<dbReference type="RefSeq" id="WP_011520436.1">
    <property type="nucleotide sequence ID" value="NC_007984.1"/>
</dbReference>
<dbReference type="SMR" id="Q1LTL1"/>
<dbReference type="STRING" id="374463.BCI_0253"/>
<dbReference type="KEGG" id="bci:BCI_0253"/>
<dbReference type="HOGENOM" id="CLU_024321_0_0_6"/>
<dbReference type="OrthoDB" id="9809920at2"/>
<dbReference type="UniPathway" id="UPA00053">
    <property type="reaction ID" value="UER00089"/>
</dbReference>
<dbReference type="Proteomes" id="UP000002427">
    <property type="component" value="Chromosome"/>
</dbReference>
<dbReference type="GO" id="GO:0005737">
    <property type="term" value="C:cytoplasm"/>
    <property type="evidence" value="ECO:0007669"/>
    <property type="project" value="UniProtKB-SubCell"/>
</dbReference>
<dbReference type="GO" id="GO:0003866">
    <property type="term" value="F:3-phosphoshikimate 1-carboxyvinyltransferase activity"/>
    <property type="evidence" value="ECO:0007669"/>
    <property type="project" value="UniProtKB-UniRule"/>
</dbReference>
<dbReference type="GO" id="GO:0008652">
    <property type="term" value="P:amino acid biosynthetic process"/>
    <property type="evidence" value="ECO:0007669"/>
    <property type="project" value="UniProtKB-KW"/>
</dbReference>
<dbReference type="GO" id="GO:0009073">
    <property type="term" value="P:aromatic amino acid family biosynthetic process"/>
    <property type="evidence" value="ECO:0007669"/>
    <property type="project" value="UniProtKB-KW"/>
</dbReference>
<dbReference type="GO" id="GO:0009423">
    <property type="term" value="P:chorismate biosynthetic process"/>
    <property type="evidence" value="ECO:0007669"/>
    <property type="project" value="UniProtKB-UniRule"/>
</dbReference>
<dbReference type="CDD" id="cd01556">
    <property type="entry name" value="EPSP_synthase"/>
    <property type="match status" value="1"/>
</dbReference>
<dbReference type="FunFam" id="3.65.10.10:FF:000003">
    <property type="entry name" value="3-phosphoshikimate 1-carboxyvinyltransferase"/>
    <property type="match status" value="1"/>
</dbReference>
<dbReference type="FunFam" id="3.65.10.10:FF:000004">
    <property type="entry name" value="3-phosphoshikimate 1-carboxyvinyltransferase"/>
    <property type="match status" value="1"/>
</dbReference>
<dbReference type="Gene3D" id="3.65.10.10">
    <property type="entry name" value="Enolpyruvate transferase domain"/>
    <property type="match status" value="2"/>
</dbReference>
<dbReference type="HAMAP" id="MF_00210">
    <property type="entry name" value="EPSP_synth"/>
    <property type="match status" value="1"/>
</dbReference>
<dbReference type="InterPro" id="IPR001986">
    <property type="entry name" value="Enolpyruvate_Tfrase_dom"/>
</dbReference>
<dbReference type="InterPro" id="IPR036968">
    <property type="entry name" value="Enolpyruvate_Tfrase_sf"/>
</dbReference>
<dbReference type="InterPro" id="IPR006264">
    <property type="entry name" value="EPSP_synthase"/>
</dbReference>
<dbReference type="InterPro" id="IPR023193">
    <property type="entry name" value="EPSP_synthase_CS"/>
</dbReference>
<dbReference type="InterPro" id="IPR013792">
    <property type="entry name" value="RNA3'P_cycl/enolpyr_Trfase_a/b"/>
</dbReference>
<dbReference type="NCBIfam" id="TIGR01356">
    <property type="entry name" value="aroA"/>
    <property type="match status" value="1"/>
</dbReference>
<dbReference type="PANTHER" id="PTHR21090">
    <property type="entry name" value="AROM/DEHYDROQUINATE SYNTHASE"/>
    <property type="match status" value="1"/>
</dbReference>
<dbReference type="PANTHER" id="PTHR21090:SF5">
    <property type="entry name" value="PENTAFUNCTIONAL AROM POLYPEPTIDE"/>
    <property type="match status" value="1"/>
</dbReference>
<dbReference type="Pfam" id="PF00275">
    <property type="entry name" value="EPSP_synthase"/>
    <property type="match status" value="1"/>
</dbReference>
<dbReference type="PIRSF" id="PIRSF000505">
    <property type="entry name" value="EPSPS"/>
    <property type="match status" value="1"/>
</dbReference>
<dbReference type="SUPFAM" id="SSF55205">
    <property type="entry name" value="EPT/RTPC-like"/>
    <property type="match status" value="1"/>
</dbReference>
<dbReference type="PROSITE" id="PS00104">
    <property type="entry name" value="EPSP_SYNTHASE_1"/>
    <property type="match status" value="1"/>
</dbReference>
<dbReference type="PROSITE" id="PS00885">
    <property type="entry name" value="EPSP_SYNTHASE_2"/>
    <property type="match status" value="1"/>
</dbReference>
<accession>Q1LTL1</accession>
<proteinExistence type="inferred from homology"/>
<sequence length="428" mass="47440">MQELLTLQPIVRVNGTIHLPGSKSISNRALLLAAQALGKTCLINLLDSYDVRYMLDALHKLGINYCLSIDRRSCEIDGIGRPLRVDTALELYLGNSGIALRSLVAALCLQNKNIIITGDKRMKNRPIGHLVDALRQGSAQIHYLEKDNYPPLLLQGGFYNGDITIDCSLSSQFLTSLLMMAPLASQDRCIFVKGRLVSKPYIDMTLAMMKSFGIVVQHDQYKIFYIKGKSQYRSPGHYLVEGDATNASYFLAAAAIRGGTVRVTGVGSNSIQGDIRFADILANMGAIIRWGVNYIECTRNSLCSIDIDMNALPDTAMTIAIVALFTYNGVTTLRNIYNWRIKETNRLVAMATELRKVGAIVVEGKEYLSIKPPNMFKIAKINTYDDHRIAMCFALVALSNVSITIVNPKCTYKTFPDFFKLLKGISIT</sequence>
<gene>
    <name evidence="1" type="primary">aroA</name>
    <name type="ordered locus">BCI_0253</name>
</gene>
<name>AROA_BAUCH</name>
<evidence type="ECO:0000255" key="1">
    <source>
        <dbReference type="HAMAP-Rule" id="MF_00210"/>
    </source>
</evidence>
<feature type="chain" id="PRO_1000012409" description="3-phosphoshikimate 1-carboxyvinyltransferase">
    <location>
        <begin position="1"/>
        <end position="428"/>
    </location>
</feature>
<feature type="active site" description="Proton acceptor" evidence="1">
    <location>
        <position position="314"/>
    </location>
</feature>
<feature type="binding site" evidence="1">
    <location>
        <position position="23"/>
    </location>
    <ligand>
        <name>3-phosphoshikimate</name>
        <dbReference type="ChEBI" id="CHEBI:145989"/>
    </ligand>
</feature>
<feature type="binding site" evidence="1">
    <location>
        <position position="23"/>
    </location>
    <ligand>
        <name>phosphoenolpyruvate</name>
        <dbReference type="ChEBI" id="CHEBI:58702"/>
    </ligand>
</feature>
<feature type="binding site" evidence="1">
    <location>
        <position position="24"/>
    </location>
    <ligand>
        <name>3-phosphoshikimate</name>
        <dbReference type="ChEBI" id="CHEBI:145989"/>
    </ligand>
</feature>
<feature type="binding site" evidence="1">
    <location>
        <position position="28"/>
    </location>
    <ligand>
        <name>3-phosphoshikimate</name>
        <dbReference type="ChEBI" id="CHEBI:145989"/>
    </ligand>
</feature>
<feature type="binding site" evidence="1">
    <location>
        <position position="97"/>
    </location>
    <ligand>
        <name>phosphoenolpyruvate</name>
        <dbReference type="ChEBI" id="CHEBI:58702"/>
    </ligand>
</feature>
<feature type="binding site" evidence="1">
    <location>
        <position position="125"/>
    </location>
    <ligand>
        <name>phosphoenolpyruvate</name>
        <dbReference type="ChEBI" id="CHEBI:58702"/>
    </ligand>
</feature>
<feature type="binding site" evidence="1">
    <location>
        <position position="170"/>
    </location>
    <ligand>
        <name>3-phosphoshikimate</name>
        <dbReference type="ChEBI" id="CHEBI:145989"/>
    </ligand>
</feature>
<feature type="binding site" evidence="1">
    <location>
        <position position="171"/>
    </location>
    <ligand>
        <name>3-phosphoshikimate</name>
        <dbReference type="ChEBI" id="CHEBI:145989"/>
    </ligand>
</feature>
<feature type="binding site" evidence="1">
    <location>
        <position position="172"/>
    </location>
    <ligand>
        <name>3-phosphoshikimate</name>
        <dbReference type="ChEBI" id="CHEBI:145989"/>
    </ligand>
</feature>
<feature type="binding site" evidence="1">
    <location>
        <position position="172"/>
    </location>
    <ligand>
        <name>phosphoenolpyruvate</name>
        <dbReference type="ChEBI" id="CHEBI:58702"/>
    </ligand>
</feature>
<feature type="binding site" evidence="1">
    <location>
        <position position="198"/>
    </location>
    <ligand>
        <name>3-phosphoshikimate</name>
        <dbReference type="ChEBI" id="CHEBI:145989"/>
    </ligand>
</feature>
<feature type="binding site" evidence="1">
    <location>
        <position position="314"/>
    </location>
    <ligand>
        <name>3-phosphoshikimate</name>
        <dbReference type="ChEBI" id="CHEBI:145989"/>
    </ligand>
</feature>
<feature type="binding site" evidence="1">
    <location>
        <position position="338"/>
    </location>
    <ligand>
        <name>3-phosphoshikimate</name>
        <dbReference type="ChEBI" id="CHEBI:145989"/>
    </ligand>
</feature>
<feature type="binding site" evidence="1">
    <location>
        <position position="342"/>
    </location>
    <ligand>
        <name>3-phosphoshikimate</name>
        <dbReference type="ChEBI" id="CHEBI:145989"/>
    </ligand>
</feature>
<feature type="binding site" evidence="1">
    <location>
        <position position="346"/>
    </location>
    <ligand>
        <name>phosphoenolpyruvate</name>
        <dbReference type="ChEBI" id="CHEBI:58702"/>
    </ligand>
</feature>
<feature type="binding site" evidence="1">
    <location>
        <position position="388"/>
    </location>
    <ligand>
        <name>phosphoenolpyruvate</name>
        <dbReference type="ChEBI" id="CHEBI:58702"/>
    </ligand>
</feature>
<feature type="binding site" evidence="1">
    <location>
        <position position="413"/>
    </location>
    <ligand>
        <name>phosphoenolpyruvate</name>
        <dbReference type="ChEBI" id="CHEBI:58702"/>
    </ligand>
</feature>
<reference key="1">
    <citation type="journal article" date="2006" name="PLoS Biol.">
        <title>Metabolic complementarity and genomics of the dual bacterial symbiosis of sharpshooters.</title>
        <authorList>
            <person name="Wu D."/>
            <person name="Daugherty S.C."/>
            <person name="Van Aken S.E."/>
            <person name="Pai G.H."/>
            <person name="Watkins K.L."/>
            <person name="Khouri H."/>
            <person name="Tallon L.J."/>
            <person name="Zaborsky J.M."/>
            <person name="Dunbar H.E."/>
            <person name="Tran P.L."/>
            <person name="Moran N.A."/>
            <person name="Eisen J.A."/>
        </authorList>
    </citation>
    <scope>NUCLEOTIDE SEQUENCE [LARGE SCALE GENOMIC DNA]</scope>
</reference>
<organism>
    <name type="scientific">Baumannia cicadellinicola subsp. Homalodisca coagulata</name>
    <dbReference type="NCBI Taxonomy" id="374463"/>
    <lineage>
        <taxon>Bacteria</taxon>
        <taxon>Pseudomonadati</taxon>
        <taxon>Pseudomonadota</taxon>
        <taxon>Gammaproteobacteria</taxon>
        <taxon>Candidatus Palibaumannia</taxon>
    </lineage>
</organism>